<feature type="chain" id="PRO_0000297984" description="S-ribosylhomocysteine lyase">
    <location>
        <begin position="1"/>
        <end position="161"/>
    </location>
</feature>
<feature type="binding site" evidence="1">
    <location>
        <position position="58"/>
    </location>
    <ligand>
        <name>Fe cation</name>
        <dbReference type="ChEBI" id="CHEBI:24875"/>
    </ligand>
</feature>
<feature type="binding site" evidence="1">
    <location>
        <position position="62"/>
    </location>
    <ligand>
        <name>Fe cation</name>
        <dbReference type="ChEBI" id="CHEBI:24875"/>
    </ligand>
</feature>
<feature type="binding site" evidence="1">
    <location>
        <position position="128"/>
    </location>
    <ligand>
        <name>Fe cation</name>
        <dbReference type="ChEBI" id="CHEBI:24875"/>
    </ligand>
</feature>
<proteinExistence type="inferred from homology"/>
<accession>A1A0P1</accession>
<protein>
    <recommendedName>
        <fullName evidence="1">S-ribosylhomocysteine lyase</fullName>
        <ecNumber evidence="1">4.4.1.21</ecNumber>
    </recommendedName>
    <alternativeName>
        <fullName evidence="1">AI-2 synthesis protein</fullName>
    </alternativeName>
    <alternativeName>
        <fullName evidence="1">Autoinducer-2 production protein LuxS</fullName>
    </alternativeName>
</protein>
<dbReference type="EC" id="4.4.1.21" evidence="1"/>
<dbReference type="EMBL" id="AP009256">
    <property type="protein sequence ID" value="BAF39274.1"/>
    <property type="molecule type" value="Genomic_DNA"/>
</dbReference>
<dbReference type="RefSeq" id="WP_011742946.1">
    <property type="nucleotide sequence ID" value="NC_008618.1"/>
</dbReference>
<dbReference type="SMR" id="A1A0P1"/>
<dbReference type="STRING" id="367928.BAD_0493"/>
<dbReference type="PaxDb" id="1680-BADO_0505"/>
<dbReference type="GeneID" id="4556315"/>
<dbReference type="KEGG" id="bad:BAD_0493"/>
<dbReference type="HOGENOM" id="CLU_107531_2_1_11"/>
<dbReference type="Proteomes" id="UP000008702">
    <property type="component" value="Chromosome"/>
</dbReference>
<dbReference type="GO" id="GO:0005506">
    <property type="term" value="F:iron ion binding"/>
    <property type="evidence" value="ECO:0007669"/>
    <property type="project" value="InterPro"/>
</dbReference>
<dbReference type="GO" id="GO:0043768">
    <property type="term" value="F:S-ribosylhomocysteine lyase activity"/>
    <property type="evidence" value="ECO:0007669"/>
    <property type="project" value="UniProtKB-UniRule"/>
</dbReference>
<dbReference type="GO" id="GO:0009372">
    <property type="term" value="P:quorum sensing"/>
    <property type="evidence" value="ECO:0007669"/>
    <property type="project" value="UniProtKB-UniRule"/>
</dbReference>
<dbReference type="Gene3D" id="3.30.1360.80">
    <property type="entry name" value="S-ribosylhomocysteinase (LuxS)"/>
    <property type="match status" value="1"/>
</dbReference>
<dbReference type="HAMAP" id="MF_00091">
    <property type="entry name" value="LuxS"/>
    <property type="match status" value="1"/>
</dbReference>
<dbReference type="InterPro" id="IPR037005">
    <property type="entry name" value="LuxS_sf"/>
</dbReference>
<dbReference type="InterPro" id="IPR011249">
    <property type="entry name" value="Metalloenz_LuxS/M16"/>
</dbReference>
<dbReference type="InterPro" id="IPR003815">
    <property type="entry name" value="S-ribosylhomocysteinase"/>
</dbReference>
<dbReference type="NCBIfam" id="NF002605">
    <property type="entry name" value="PRK02260.2-3"/>
    <property type="match status" value="1"/>
</dbReference>
<dbReference type="NCBIfam" id="NF002608">
    <property type="entry name" value="PRK02260.3-1"/>
    <property type="match status" value="1"/>
</dbReference>
<dbReference type="PANTHER" id="PTHR35799">
    <property type="entry name" value="S-RIBOSYLHOMOCYSTEINE LYASE"/>
    <property type="match status" value="1"/>
</dbReference>
<dbReference type="PANTHER" id="PTHR35799:SF1">
    <property type="entry name" value="S-RIBOSYLHOMOCYSTEINE LYASE"/>
    <property type="match status" value="1"/>
</dbReference>
<dbReference type="Pfam" id="PF02664">
    <property type="entry name" value="LuxS"/>
    <property type="match status" value="1"/>
</dbReference>
<dbReference type="PIRSF" id="PIRSF006160">
    <property type="entry name" value="AI2"/>
    <property type="match status" value="1"/>
</dbReference>
<dbReference type="PRINTS" id="PR01487">
    <property type="entry name" value="LUXSPROTEIN"/>
</dbReference>
<dbReference type="SUPFAM" id="SSF63411">
    <property type="entry name" value="LuxS/MPP-like metallohydrolase"/>
    <property type="match status" value="1"/>
</dbReference>
<evidence type="ECO:0000255" key="1">
    <source>
        <dbReference type="HAMAP-Rule" id="MF_00091"/>
    </source>
</evidence>
<comment type="function">
    <text evidence="1">Involved in the synthesis of autoinducer 2 (AI-2) which is secreted by bacteria and is used to communicate both the cell density and the metabolic potential of the environment. The regulation of gene expression in response to changes in cell density is called quorum sensing. Catalyzes the transformation of S-ribosylhomocysteine (RHC) to homocysteine (HC) and 4,5-dihydroxy-2,3-pentadione (DPD).</text>
</comment>
<comment type="catalytic activity">
    <reaction evidence="1">
        <text>S-(5-deoxy-D-ribos-5-yl)-L-homocysteine = (S)-4,5-dihydroxypentane-2,3-dione + L-homocysteine</text>
        <dbReference type="Rhea" id="RHEA:17753"/>
        <dbReference type="ChEBI" id="CHEBI:29484"/>
        <dbReference type="ChEBI" id="CHEBI:58195"/>
        <dbReference type="ChEBI" id="CHEBI:58199"/>
        <dbReference type="EC" id="4.4.1.21"/>
    </reaction>
</comment>
<comment type="cofactor">
    <cofactor evidence="1">
        <name>Fe cation</name>
        <dbReference type="ChEBI" id="CHEBI:24875"/>
    </cofactor>
    <text evidence="1">Binds 1 Fe cation per subunit.</text>
</comment>
<comment type="subunit">
    <text evidence="1">Homodimer.</text>
</comment>
<comment type="similarity">
    <text evidence="1">Belongs to the LuxS family.</text>
</comment>
<keyword id="KW-0071">Autoinducer synthesis</keyword>
<keyword id="KW-0408">Iron</keyword>
<keyword id="KW-0456">Lyase</keyword>
<keyword id="KW-0479">Metal-binding</keyword>
<keyword id="KW-0673">Quorum sensing</keyword>
<keyword id="KW-1185">Reference proteome</keyword>
<organism>
    <name type="scientific">Bifidobacterium adolescentis (strain ATCC 15703 / DSM 20083 / NCTC 11814 / E194a)</name>
    <dbReference type="NCBI Taxonomy" id="367928"/>
    <lineage>
        <taxon>Bacteria</taxon>
        <taxon>Bacillati</taxon>
        <taxon>Actinomycetota</taxon>
        <taxon>Actinomycetes</taxon>
        <taxon>Bifidobacteriales</taxon>
        <taxon>Bifidobacteriaceae</taxon>
        <taxon>Bifidobacterium</taxon>
    </lineage>
</organism>
<sequence length="161" mass="18194">MAEDKPVVESFQLDHTKVKAPYVRYIDTETGLHGDVISNYDLRLVQPNENAIPTGGLHTIEHTIAVLLRERIPGYIDCSPFGCRTGFHLLTWGEHSTEDVARALKESLEFIAYEATWDDVPATTIESCGNYRDHSLFTAKEWCKDILAKGISSDPFERRLV</sequence>
<name>LUXS_BIFAA</name>
<reference key="1">
    <citation type="submission" date="2006-12" db="EMBL/GenBank/DDBJ databases">
        <title>Bifidobacterium adolescentis complete genome sequence.</title>
        <authorList>
            <person name="Suzuki T."/>
            <person name="Tsuda Y."/>
            <person name="Kanou N."/>
            <person name="Inoue T."/>
            <person name="Kumazaki K."/>
            <person name="Nagano S."/>
            <person name="Hirai S."/>
            <person name="Tanaka K."/>
            <person name="Watanabe K."/>
        </authorList>
    </citation>
    <scope>NUCLEOTIDE SEQUENCE [LARGE SCALE GENOMIC DNA]</scope>
    <source>
        <strain>ATCC 15703 / DSM 20083 / NCTC 11814 / E194a</strain>
    </source>
</reference>
<gene>
    <name evidence="1" type="primary">luxS</name>
    <name type="ordered locus">BAD_0493</name>
</gene>